<accession>Q8MFA1</accession>
<accession>Q6YXP1</accession>
<geneLocation type="chloroplast"/>
<name>RR14_PHYPA</name>
<evidence type="ECO:0000255" key="1">
    <source>
        <dbReference type="HAMAP-Rule" id="MF_00537"/>
    </source>
</evidence>
<evidence type="ECO:0000269" key="2">
    <source>
    </source>
</evidence>
<evidence type="ECO:0000305" key="3"/>
<organism>
    <name type="scientific">Physcomitrium patens</name>
    <name type="common">Spreading-leaved earth moss</name>
    <name type="synonym">Physcomitrella patens</name>
    <dbReference type="NCBI Taxonomy" id="3218"/>
    <lineage>
        <taxon>Eukaryota</taxon>
        <taxon>Viridiplantae</taxon>
        <taxon>Streptophyta</taxon>
        <taxon>Embryophyta</taxon>
        <taxon>Bryophyta</taxon>
        <taxon>Bryophytina</taxon>
        <taxon>Bryopsida</taxon>
        <taxon>Funariidae</taxon>
        <taxon>Funariales</taxon>
        <taxon>Funariaceae</taxon>
        <taxon>Physcomitrium</taxon>
    </lineage>
</organism>
<proteinExistence type="evidence at transcript level"/>
<gene>
    <name evidence="1" type="primary">rps14</name>
</gene>
<keyword id="KW-0150">Chloroplast</keyword>
<keyword id="KW-0934">Plastid</keyword>
<keyword id="KW-1185">Reference proteome</keyword>
<keyword id="KW-0687">Ribonucleoprotein</keyword>
<keyword id="KW-0689">Ribosomal protein</keyword>
<keyword id="KW-0691">RNA editing</keyword>
<keyword id="KW-0694">RNA-binding</keyword>
<keyword id="KW-0699">rRNA-binding</keyword>
<sequence length="100" mass="12013">MAKKSLIEREKKRQKLEKKYQDFRHSIKKKIKETSSLDEKWEFQKQLQALPRNSAPTRLHRRCFLTGRPRANYRDFGLSRHVLREMAHACFLPGVTKSSW</sequence>
<dbReference type="EMBL" id="AB078009">
    <property type="protein sequence ID" value="BAC05490.1"/>
    <property type="molecule type" value="Genomic_DNA"/>
</dbReference>
<dbReference type="EMBL" id="AP005672">
    <property type="protein sequence ID" value="BAC85054.1"/>
    <property type="molecule type" value="Genomic_DNA"/>
</dbReference>
<dbReference type="RefSeq" id="NP_904204.1">
    <property type="nucleotide sequence ID" value="NC_005087.2"/>
</dbReference>
<dbReference type="RefSeq" id="YP_009477534.1">
    <property type="nucleotide sequence ID" value="NC_037465.1"/>
</dbReference>
<dbReference type="SMR" id="Q8MFA1"/>
<dbReference type="FunCoup" id="Q8MFA1">
    <property type="interactions" value="66"/>
</dbReference>
<dbReference type="STRING" id="3218.Q8MFA1"/>
<dbReference type="GeneID" id="2546780"/>
<dbReference type="GeneID" id="36487155"/>
<dbReference type="KEGG" id="ppp:2546780"/>
<dbReference type="InParanoid" id="Q8MFA1"/>
<dbReference type="OrthoDB" id="1871635at2759"/>
<dbReference type="Proteomes" id="UP000006727">
    <property type="component" value="Chloroplast"/>
</dbReference>
<dbReference type="GO" id="GO:0009507">
    <property type="term" value="C:chloroplast"/>
    <property type="evidence" value="ECO:0007669"/>
    <property type="project" value="UniProtKB-SubCell"/>
</dbReference>
<dbReference type="GO" id="GO:0015935">
    <property type="term" value="C:small ribosomal subunit"/>
    <property type="evidence" value="ECO:0000318"/>
    <property type="project" value="GO_Central"/>
</dbReference>
<dbReference type="GO" id="GO:0019843">
    <property type="term" value="F:rRNA binding"/>
    <property type="evidence" value="ECO:0007669"/>
    <property type="project" value="UniProtKB-UniRule"/>
</dbReference>
<dbReference type="GO" id="GO:0003735">
    <property type="term" value="F:structural constituent of ribosome"/>
    <property type="evidence" value="ECO:0000318"/>
    <property type="project" value="GO_Central"/>
</dbReference>
<dbReference type="GO" id="GO:0006412">
    <property type="term" value="P:translation"/>
    <property type="evidence" value="ECO:0000318"/>
    <property type="project" value="GO_Central"/>
</dbReference>
<dbReference type="FunFam" id="1.10.287.1480:FF:000001">
    <property type="entry name" value="30S ribosomal protein S14"/>
    <property type="match status" value="1"/>
</dbReference>
<dbReference type="Gene3D" id="1.10.287.1480">
    <property type="match status" value="1"/>
</dbReference>
<dbReference type="HAMAP" id="MF_00537">
    <property type="entry name" value="Ribosomal_uS14_1"/>
    <property type="match status" value="1"/>
</dbReference>
<dbReference type="InterPro" id="IPR001209">
    <property type="entry name" value="Ribosomal_uS14"/>
</dbReference>
<dbReference type="InterPro" id="IPR023036">
    <property type="entry name" value="Ribosomal_uS14_bac/plastid"/>
</dbReference>
<dbReference type="InterPro" id="IPR018271">
    <property type="entry name" value="Ribosomal_uS14_CS"/>
</dbReference>
<dbReference type="NCBIfam" id="NF006477">
    <property type="entry name" value="PRK08881.1"/>
    <property type="match status" value="1"/>
</dbReference>
<dbReference type="PANTHER" id="PTHR19836">
    <property type="entry name" value="30S RIBOSOMAL PROTEIN S14"/>
    <property type="match status" value="1"/>
</dbReference>
<dbReference type="PANTHER" id="PTHR19836:SF19">
    <property type="entry name" value="SMALL RIBOSOMAL SUBUNIT PROTEIN US14M"/>
    <property type="match status" value="1"/>
</dbReference>
<dbReference type="Pfam" id="PF00253">
    <property type="entry name" value="Ribosomal_S14"/>
    <property type="match status" value="1"/>
</dbReference>
<dbReference type="SUPFAM" id="SSF57716">
    <property type="entry name" value="Glucocorticoid receptor-like (DNA-binding domain)"/>
    <property type="match status" value="1"/>
</dbReference>
<dbReference type="PROSITE" id="PS00527">
    <property type="entry name" value="RIBOSOMAL_S14"/>
    <property type="match status" value="1"/>
</dbReference>
<reference key="1">
    <citation type="journal article" date="2002" name="Biochim. Biophys. Acta">
        <title>Chloroplast ribosomal S14 protein transcript is edited to create a translation initiation codon in the moss Physcomitrella patens.</title>
        <authorList>
            <person name="Miyata Y."/>
            <person name="Sugiura C."/>
            <person name="Kobayashi Y."/>
            <person name="Hagiwara M."/>
            <person name="Sugita M."/>
        </authorList>
    </citation>
    <scope>NUCLEOTIDE SEQUENCE [GENOMIC DNA / MRNA]</scope>
    <scope>RNA EDITING</scope>
    <source>
        <tissue>Protonema</tissue>
    </source>
</reference>
<reference key="2">
    <citation type="journal article" date="2004" name="J. Plant Physiol.">
        <title>Tissue- and stage-specific RNA editing of rps14 transcripts in moss (Physcomitrella patens) chloroplasts.</title>
        <authorList>
            <person name="Miyata Y."/>
            <person name="Sugita M."/>
        </authorList>
    </citation>
    <scope>NUCLEOTIDE SEQUENCE [MRNA]</scope>
    <scope>DIFFERENTIAL RNA EDITING</scope>
    <source>
        <tissue>Protonema</tissue>
    </source>
</reference>
<reference key="3">
    <citation type="journal article" date="2003" name="Nucleic Acids Res.">
        <title>Complete chloroplast DNA sequence of the moss Physcomitrella patens: evidence for the loss and relocation of rpoA from the chloroplast to the nucleus.</title>
        <authorList>
            <person name="Sugiura C."/>
            <person name="Kobayashi Y."/>
            <person name="Setsuyuki A."/>
            <person name="Sugita C."/>
            <person name="Sugita M."/>
        </authorList>
    </citation>
    <scope>NUCLEOTIDE SEQUENCE [LARGE SCALE GENOMIC DNA]</scope>
    <source>
        <strain>cv. Gransden 2004</strain>
    </source>
</reference>
<feature type="chain" id="PRO_0000269157" description="Small ribosomal subunit protein uS14c">
    <location>
        <begin position="1"/>
        <end position="100"/>
    </location>
</feature>
<protein>
    <recommendedName>
        <fullName evidence="1">Small ribosomal subunit protein uS14c</fullName>
    </recommendedName>
    <alternativeName>
        <fullName evidence="3">30S ribosomal protein S14, chloroplastic</fullName>
    </alternativeName>
</protein>
<comment type="function">
    <text evidence="1">Binds 16S rRNA, required for the assembly of 30S particles.</text>
</comment>
<comment type="subunit">
    <text evidence="1">Part of the 30S ribosomal subunit.</text>
</comment>
<comment type="subcellular location">
    <subcellularLocation>
        <location>Plastid</location>
        <location>Chloroplast</location>
    </subcellularLocation>
</comment>
<comment type="RNA editing">
    <location>
        <position position="1" evidence="2"/>
    </location>
    <text>The initiator methionine is created by RNA editing. Approximately 80% of transcripts are edited in young tissue (protonema), while editing declines to 20% of transcripts in mature leaves.</text>
</comment>
<comment type="miscellaneous">
    <text>RNA editing decreases as the tissue ages.</text>
</comment>
<comment type="similarity">
    <text evidence="1">Belongs to the universal ribosomal protein uS14 family.</text>
</comment>